<sequence length="183" mass="19859">MTATAQQLEYLKNSIKSIQDYPKPGILFRDVTSLLEDPKAYALSIDLLVERYKNAGITKVVGTEARGFLFGAPVALGLGVGFVPVRKPGKLPRETISETYDLEYGTDQLEIHVDAIKPGDKVLVVDDLLATGGTIEATVKLIRRLGGEVADAAFIINLFDLGGEQRLEKQGITSYSLVPFPGH</sequence>
<organism>
    <name type="scientific">Escherichia coli O6:K15:H31 (strain 536 / UPEC)</name>
    <dbReference type="NCBI Taxonomy" id="362663"/>
    <lineage>
        <taxon>Bacteria</taxon>
        <taxon>Pseudomonadati</taxon>
        <taxon>Pseudomonadota</taxon>
        <taxon>Gammaproteobacteria</taxon>
        <taxon>Enterobacterales</taxon>
        <taxon>Enterobacteriaceae</taxon>
        <taxon>Escherichia</taxon>
    </lineage>
</organism>
<proteinExistence type="inferred from homology"/>
<name>APT_ECOL5</name>
<feature type="chain" id="PRO_1000000280" description="Adenine phosphoribosyltransferase">
    <location>
        <begin position="1"/>
        <end position="183"/>
    </location>
</feature>
<evidence type="ECO:0000255" key="1">
    <source>
        <dbReference type="HAMAP-Rule" id="MF_00004"/>
    </source>
</evidence>
<dbReference type="EC" id="2.4.2.7" evidence="1"/>
<dbReference type="EMBL" id="CP000247">
    <property type="protein sequence ID" value="ABG68559.1"/>
    <property type="molecule type" value="Genomic_DNA"/>
</dbReference>
<dbReference type="RefSeq" id="WP_000127356.1">
    <property type="nucleotide sequence ID" value="NC_008253.1"/>
</dbReference>
<dbReference type="SMR" id="Q0TKH2"/>
<dbReference type="GeneID" id="93776981"/>
<dbReference type="KEGG" id="ecp:ECP_0530"/>
<dbReference type="HOGENOM" id="CLU_063339_3_0_6"/>
<dbReference type="UniPathway" id="UPA00588">
    <property type="reaction ID" value="UER00646"/>
</dbReference>
<dbReference type="Proteomes" id="UP000009182">
    <property type="component" value="Chromosome"/>
</dbReference>
<dbReference type="GO" id="GO:0005737">
    <property type="term" value="C:cytoplasm"/>
    <property type="evidence" value="ECO:0007669"/>
    <property type="project" value="UniProtKB-SubCell"/>
</dbReference>
<dbReference type="GO" id="GO:0002055">
    <property type="term" value="F:adenine binding"/>
    <property type="evidence" value="ECO:0007669"/>
    <property type="project" value="TreeGrafter"/>
</dbReference>
<dbReference type="GO" id="GO:0003999">
    <property type="term" value="F:adenine phosphoribosyltransferase activity"/>
    <property type="evidence" value="ECO:0007669"/>
    <property type="project" value="UniProtKB-UniRule"/>
</dbReference>
<dbReference type="GO" id="GO:0016208">
    <property type="term" value="F:AMP binding"/>
    <property type="evidence" value="ECO:0007669"/>
    <property type="project" value="TreeGrafter"/>
</dbReference>
<dbReference type="GO" id="GO:0006168">
    <property type="term" value="P:adenine salvage"/>
    <property type="evidence" value="ECO:0007669"/>
    <property type="project" value="InterPro"/>
</dbReference>
<dbReference type="GO" id="GO:0044209">
    <property type="term" value="P:AMP salvage"/>
    <property type="evidence" value="ECO:0007669"/>
    <property type="project" value="UniProtKB-UniRule"/>
</dbReference>
<dbReference type="GO" id="GO:0006166">
    <property type="term" value="P:purine ribonucleoside salvage"/>
    <property type="evidence" value="ECO:0007669"/>
    <property type="project" value="UniProtKB-KW"/>
</dbReference>
<dbReference type="CDD" id="cd06223">
    <property type="entry name" value="PRTases_typeI"/>
    <property type="match status" value="1"/>
</dbReference>
<dbReference type="FunFam" id="3.40.50.2020:FF:000004">
    <property type="entry name" value="Adenine phosphoribosyltransferase"/>
    <property type="match status" value="1"/>
</dbReference>
<dbReference type="Gene3D" id="3.40.50.2020">
    <property type="match status" value="1"/>
</dbReference>
<dbReference type="HAMAP" id="MF_00004">
    <property type="entry name" value="Aden_phosphoribosyltr"/>
    <property type="match status" value="1"/>
</dbReference>
<dbReference type="InterPro" id="IPR005764">
    <property type="entry name" value="Ade_phspho_trans"/>
</dbReference>
<dbReference type="InterPro" id="IPR000836">
    <property type="entry name" value="PRibTrfase_dom"/>
</dbReference>
<dbReference type="InterPro" id="IPR029057">
    <property type="entry name" value="PRTase-like"/>
</dbReference>
<dbReference type="InterPro" id="IPR050054">
    <property type="entry name" value="UPRTase/APRTase"/>
</dbReference>
<dbReference type="NCBIfam" id="TIGR01090">
    <property type="entry name" value="apt"/>
    <property type="match status" value="1"/>
</dbReference>
<dbReference type="NCBIfam" id="NF002632">
    <property type="entry name" value="PRK02304.1-1"/>
    <property type="match status" value="1"/>
</dbReference>
<dbReference type="NCBIfam" id="NF002633">
    <property type="entry name" value="PRK02304.1-2"/>
    <property type="match status" value="1"/>
</dbReference>
<dbReference type="NCBIfam" id="NF002634">
    <property type="entry name" value="PRK02304.1-3"/>
    <property type="match status" value="1"/>
</dbReference>
<dbReference type="NCBIfam" id="NF002636">
    <property type="entry name" value="PRK02304.1-5"/>
    <property type="match status" value="1"/>
</dbReference>
<dbReference type="PANTHER" id="PTHR32315">
    <property type="entry name" value="ADENINE PHOSPHORIBOSYLTRANSFERASE"/>
    <property type="match status" value="1"/>
</dbReference>
<dbReference type="PANTHER" id="PTHR32315:SF3">
    <property type="entry name" value="ADENINE PHOSPHORIBOSYLTRANSFERASE"/>
    <property type="match status" value="1"/>
</dbReference>
<dbReference type="Pfam" id="PF00156">
    <property type="entry name" value="Pribosyltran"/>
    <property type="match status" value="1"/>
</dbReference>
<dbReference type="SUPFAM" id="SSF53271">
    <property type="entry name" value="PRTase-like"/>
    <property type="match status" value="1"/>
</dbReference>
<dbReference type="PROSITE" id="PS00103">
    <property type="entry name" value="PUR_PYR_PR_TRANSFER"/>
    <property type="match status" value="1"/>
</dbReference>
<keyword id="KW-0963">Cytoplasm</keyword>
<keyword id="KW-0328">Glycosyltransferase</keyword>
<keyword id="KW-0660">Purine salvage</keyword>
<keyword id="KW-0808">Transferase</keyword>
<accession>Q0TKH2</accession>
<comment type="function">
    <text evidence="1">Catalyzes a salvage reaction resulting in the formation of AMP, that is energically less costly than de novo synthesis.</text>
</comment>
<comment type="catalytic activity">
    <reaction evidence="1">
        <text>AMP + diphosphate = 5-phospho-alpha-D-ribose 1-diphosphate + adenine</text>
        <dbReference type="Rhea" id="RHEA:16609"/>
        <dbReference type="ChEBI" id="CHEBI:16708"/>
        <dbReference type="ChEBI" id="CHEBI:33019"/>
        <dbReference type="ChEBI" id="CHEBI:58017"/>
        <dbReference type="ChEBI" id="CHEBI:456215"/>
        <dbReference type="EC" id="2.4.2.7"/>
    </reaction>
</comment>
<comment type="pathway">
    <text evidence="1">Purine metabolism; AMP biosynthesis via salvage pathway; AMP from adenine: step 1/1.</text>
</comment>
<comment type="subunit">
    <text evidence="1">Homodimer.</text>
</comment>
<comment type="subcellular location">
    <subcellularLocation>
        <location evidence="1">Cytoplasm</location>
    </subcellularLocation>
</comment>
<comment type="similarity">
    <text evidence="1">Belongs to the purine/pyrimidine phosphoribosyltransferase family.</text>
</comment>
<reference key="1">
    <citation type="journal article" date="2006" name="Mol. Microbiol.">
        <title>Role of pathogenicity island-associated integrases in the genome plasticity of uropathogenic Escherichia coli strain 536.</title>
        <authorList>
            <person name="Hochhut B."/>
            <person name="Wilde C."/>
            <person name="Balling G."/>
            <person name="Middendorf B."/>
            <person name="Dobrindt U."/>
            <person name="Brzuszkiewicz E."/>
            <person name="Gottschalk G."/>
            <person name="Carniel E."/>
            <person name="Hacker J."/>
        </authorList>
    </citation>
    <scope>NUCLEOTIDE SEQUENCE [LARGE SCALE GENOMIC DNA]</scope>
    <source>
        <strain>536 / UPEC</strain>
    </source>
</reference>
<protein>
    <recommendedName>
        <fullName evidence="1">Adenine phosphoribosyltransferase</fullName>
        <shortName evidence="1">APRT</shortName>
        <ecNumber evidence="1">2.4.2.7</ecNumber>
    </recommendedName>
</protein>
<gene>
    <name evidence="1" type="primary">apt</name>
    <name type="ordered locus">ECP_0530</name>
</gene>